<feature type="signal peptide" evidence="3">
    <location>
        <begin position="1"/>
        <end position="26"/>
    </location>
</feature>
<feature type="chain" id="PRO_0000343449" description="Membrane protein PTM1">
    <location>
        <begin position="27"/>
        <end position="523"/>
    </location>
</feature>
<feature type="topological domain" description="Lumenal" evidence="3">
    <location>
        <begin position="27"/>
        <end position="197"/>
    </location>
</feature>
<feature type="transmembrane region" description="Helical; Name=1" evidence="3">
    <location>
        <begin position="198"/>
        <end position="218"/>
    </location>
</feature>
<feature type="topological domain" description="Cytoplasmic" evidence="3">
    <location>
        <begin position="219"/>
        <end position="230"/>
    </location>
</feature>
<feature type="transmembrane region" description="Helical; Name=2" evidence="3">
    <location>
        <begin position="231"/>
        <end position="251"/>
    </location>
</feature>
<feature type="topological domain" description="Lumenal" evidence="3">
    <location>
        <begin position="252"/>
        <end position="265"/>
    </location>
</feature>
<feature type="transmembrane region" description="Helical; Name=3" evidence="3">
    <location>
        <begin position="266"/>
        <end position="286"/>
    </location>
</feature>
<feature type="topological domain" description="Cytoplasmic" evidence="3">
    <location>
        <begin position="287"/>
        <end position="304"/>
    </location>
</feature>
<feature type="transmembrane region" description="Helical; Name=4" evidence="3">
    <location>
        <begin position="305"/>
        <end position="325"/>
    </location>
</feature>
<feature type="topological domain" description="Lumenal" evidence="3">
    <location>
        <begin position="326"/>
        <end position="333"/>
    </location>
</feature>
<feature type="transmembrane region" description="Helical; Name=5" evidence="3">
    <location>
        <begin position="334"/>
        <end position="354"/>
    </location>
</feature>
<feature type="topological domain" description="Cytoplasmic" evidence="3">
    <location>
        <begin position="355"/>
        <end position="381"/>
    </location>
</feature>
<feature type="transmembrane region" description="Helical; Name=6" evidence="3">
    <location>
        <begin position="382"/>
        <end position="402"/>
    </location>
</feature>
<feature type="topological domain" description="Lumenal" evidence="3">
    <location>
        <begin position="403"/>
        <end position="417"/>
    </location>
</feature>
<feature type="transmembrane region" description="Helical; Name=7" evidence="3">
    <location>
        <begin position="418"/>
        <end position="438"/>
    </location>
</feature>
<feature type="topological domain" description="Cytoplasmic" evidence="3">
    <location>
        <begin position="439"/>
        <end position="523"/>
    </location>
</feature>
<feature type="region of interest" description="Disordered" evidence="4">
    <location>
        <begin position="483"/>
        <end position="523"/>
    </location>
</feature>
<feature type="compositionally biased region" description="Acidic residues" evidence="4">
    <location>
        <begin position="488"/>
        <end position="503"/>
    </location>
</feature>
<feature type="modified residue" description="Phosphoserine" evidence="2">
    <location>
        <position position="480"/>
    </location>
</feature>
<feature type="modified residue" description="Phosphothreonine" evidence="2">
    <location>
        <position position="483"/>
    </location>
</feature>
<feature type="modified residue" description="Phosphothreonine" evidence="2">
    <location>
        <position position="498"/>
    </location>
</feature>
<feature type="glycosylation site" description="N-linked (GlcNAc...) asparagine" evidence="3">
    <location>
        <position position="132"/>
    </location>
</feature>
<evidence type="ECO:0000250" key="1"/>
<evidence type="ECO:0000250" key="2">
    <source>
        <dbReference type="UniProtKB" id="P32857"/>
    </source>
</evidence>
<evidence type="ECO:0000255" key="3"/>
<evidence type="ECO:0000256" key="4">
    <source>
        <dbReference type="SAM" id="MobiDB-lite"/>
    </source>
</evidence>
<evidence type="ECO:0000305" key="5"/>
<organism>
    <name type="scientific">Saccharomyces cerevisiae (strain YJM789)</name>
    <name type="common">Baker's yeast</name>
    <dbReference type="NCBI Taxonomy" id="307796"/>
    <lineage>
        <taxon>Eukaryota</taxon>
        <taxon>Fungi</taxon>
        <taxon>Dikarya</taxon>
        <taxon>Ascomycota</taxon>
        <taxon>Saccharomycotina</taxon>
        <taxon>Saccharomycetes</taxon>
        <taxon>Saccharomycetales</taxon>
        <taxon>Saccharomycetaceae</taxon>
        <taxon>Saccharomyces</taxon>
    </lineage>
</organism>
<protein>
    <recommendedName>
        <fullName>Membrane protein PTM1</fullName>
    </recommendedName>
</protein>
<accession>A6ZZS6</accession>
<sequence length="523" mass="60078">MRVYQFCRPFQLFTYFLCYLLVFVKANKEKISQKNYQVCAGMYSKEDWKGKIDPFISFNLKKISGLSDESDPGLVVAIYDFQDFEHLGVQLPDEEMYYICDDYAIDIGICEEENRDEFIVQDVVYDPYTSTNRSLANPIMTFSQNEVGLHDTRYPIKETGFYCVTAFRSSTSTKFNAVVNFRNAYGQLAGTEINKLPLYGLLAVAYVVAMALYSFAFWKHKHELLPLQKYLLAFFVFLTAETIFVWAYYDLKNEKGDTAGIKVYMVFLSILTAGKVTFSFFLLLIIALGYGIVYPKLNKTLMRRCQMYGALTYAICIGFLIQSYLTDMEAPSPLILITLIPMALALIIFYYMIIRSMTKTVIYLKEQRQIVKLNMYKKLLYIIYASFLSVLAGSIVSSFIYVGMNTIDMIEKNWRSRFFVTDFWPTLVYFIVFVTIAFLWRPTDTSYMLAASQQLPTDPENVADFDLGDLQSFDDQDDASIITGERGIDEDDLNLNFTDDEEGHDNVNNHSQGHGPVSPSPTK</sequence>
<dbReference type="EMBL" id="AAFW02000152">
    <property type="protein sequence ID" value="EDN59869.1"/>
    <property type="molecule type" value="Genomic_DNA"/>
</dbReference>
<dbReference type="SMR" id="A6ZZS6"/>
<dbReference type="GlyCosmos" id="A6ZZS6">
    <property type="glycosylation" value="1 site, No reported glycans"/>
</dbReference>
<dbReference type="HOGENOM" id="CLU_024065_1_0_1"/>
<dbReference type="Proteomes" id="UP000007060">
    <property type="component" value="Unassembled WGS sequence"/>
</dbReference>
<dbReference type="GO" id="GO:0005829">
    <property type="term" value="C:cytosol"/>
    <property type="evidence" value="ECO:0007669"/>
    <property type="project" value="GOC"/>
</dbReference>
<dbReference type="GO" id="GO:0031901">
    <property type="term" value="C:early endosome membrane"/>
    <property type="evidence" value="ECO:0007669"/>
    <property type="project" value="UniProtKB-SubCell"/>
</dbReference>
<dbReference type="GO" id="GO:0000139">
    <property type="term" value="C:Golgi membrane"/>
    <property type="evidence" value="ECO:0007669"/>
    <property type="project" value="UniProtKB-SubCell"/>
</dbReference>
<dbReference type="GO" id="GO:0042147">
    <property type="term" value="P:retrograde transport, endosome to Golgi"/>
    <property type="evidence" value="ECO:0007669"/>
    <property type="project" value="TreeGrafter"/>
</dbReference>
<dbReference type="InterPro" id="IPR053937">
    <property type="entry name" value="GOST_TM"/>
</dbReference>
<dbReference type="InterPro" id="IPR009637">
    <property type="entry name" value="GPR107/GPR108-like"/>
</dbReference>
<dbReference type="InterPro" id="IPR053938">
    <property type="entry name" value="PTM1-like_N"/>
</dbReference>
<dbReference type="PANTHER" id="PTHR21229:SF1">
    <property type="entry name" value="GH17801P"/>
    <property type="match status" value="1"/>
</dbReference>
<dbReference type="PANTHER" id="PTHR21229">
    <property type="entry name" value="LUNG SEVEN TRANSMEMBRANE RECEPTOR"/>
    <property type="match status" value="1"/>
</dbReference>
<dbReference type="Pfam" id="PF06814">
    <property type="entry name" value="GOST_TM"/>
    <property type="match status" value="1"/>
</dbReference>
<dbReference type="Pfam" id="PF21902">
    <property type="entry name" value="PTM1-like_N"/>
    <property type="match status" value="1"/>
</dbReference>
<keyword id="KW-0967">Endosome</keyword>
<keyword id="KW-0325">Glycoprotein</keyword>
<keyword id="KW-0333">Golgi apparatus</keyword>
<keyword id="KW-0472">Membrane</keyword>
<keyword id="KW-0597">Phosphoprotein</keyword>
<keyword id="KW-0732">Signal</keyword>
<keyword id="KW-0812">Transmembrane</keyword>
<keyword id="KW-1133">Transmembrane helix</keyword>
<gene>
    <name type="primary">PTM1</name>
    <name type="ORF">SCY_3336</name>
</gene>
<reference key="1">
    <citation type="journal article" date="2007" name="Proc. Natl. Acad. Sci. U.S.A.">
        <title>Genome sequencing and comparative analysis of Saccharomyces cerevisiae strain YJM789.</title>
        <authorList>
            <person name="Wei W."/>
            <person name="McCusker J.H."/>
            <person name="Hyman R.W."/>
            <person name="Jones T."/>
            <person name="Ning Y."/>
            <person name="Cao Z."/>
            <person name="Gu Z."/>
            <person name="Bruno D."/>
            <person name="Miranda M."/>
            <person name="Nguyen M."/>
            <person name="Wilhelmy J."/>
            <person name="Komp C."/>
            <person name="Tamse R."/>
            <person name="Wang X."/>
            <person name="Jia P."/>
            <person name="Luedi P."/>
            <person name="Oefner P.J."/>
            <person name="David L."/>
            <person name="Dietrich F.S."/>
            <person name="Li Y."/>
            <person name="Davis R.W."/>
            <person name="Steinmetz L.M."/>
        </authorList>
    </citation>
    <scope>NUCLEOTIDE SEQUENCE [LARGE SCALE GENOMIC DNA]</scope>
    <source>
        <strain>YJM789</strain>
    </source>
</reference>
<proteinExistence type="inferred from homology"/>
<comment type="subcellular location">
    <subcellularLocation>
        <location evidence="1">Golgi apparatus membrane</location>
        <topology evidence="1">Multi-pass membrane protein</topology>
    </subcellularLocation>
    <subcellularLocation>
        <location evidence="1">Early endosome membrane</location>
        <topology evidence="1">Multi-pass membrane protein</topology>
    </subcellularLocation>
    <text evidence="1">Copurifies with the late Golgi SNARE TLG2.</text>
</comment>
<comment type="similarity">
    <text evidence="5">Belongs to the LU7TM family.</text>
</comment>
<name>PTM1_YEAS7</name>